<name>GUAA_STRR6</name>
<accession>P64298</accession>
<accession>Q97PZ3</accession>
<organism>
    <name type="scientific">Streptococcus pneumoniae (strain ATCC BAA-255 / R6)</name>
    <dbReference type="NCBI Taxonomy" id="171101"/>
    <lineage>
        <taxon>Bacteria</taxon>
        <taxon>Bacillati</taxon>
        <taxon>Bacillota</taxon>
        <taxon>Bacilli</taxon>
        <taxon>Lactobacillales</taxon>
        <taxon>Streptococcaceae</taxon>
        <taxon>Streptococcus</taxon>
    </lineage>
</organism>
<keyword id="KW-0067">ATP-binding</keyword>
<keyword id="KW-0315">Glutamine amidotransferase</keyword>
<keyword id="KW-0332">GMP biosynthesis</keyword>
<keyword id="KW-0436">Ligase</keyword>
<keyword id="KW-0547">Nucleotide-binding</keyword>
<keyword id="KW-0658">Purine biosynthesis</keyword>
<keyword id="KW-1185">Reference proteome</keyword>
<sequence>MSNISTDLQDVEKIIVLDYGSQYNQLISRRIREIGVFSELKSHKISAAEVREVNPVGIILSGGPNSVYEDGSFDIDPEIFELGIPILGICYGMQLLTHKLGGKVVPAGDAGNREYGQSTLTHTPSALFESTPDEQTVLMSHGDAVTEIPADFVRTGTSADCPYAAIENPDKHIYGIQFHPEVRHSVYGNDILRNFALNICKAKGDWSMDNFIDMQIKKIRETVGDKRVLLGLSGGVDSSVVGVLLQKAIGDQLICIFVDHGLLRKGEADQVMDMLGGKFGLNIVKADAAKRFLDKLAGVSDPEQKRKIIGNEFVYVFDDEASKLKDVKFLAQGTLYTDVIESGTDTAQTIKSHHNVGGLPEDMQFELIEPLNTLYKDEVRALGTELGMPDHIVWRQPFPGPGLAIRVMGEITEEKLETVRESDAILREEIAKAGLDRDIWQYFTVNTGVRSVGVMGDGRTYDYTIAIRAITSIDGMTADFAKIPWEVLQKISVRIVNEVDHVNRIVYDITSKPPATVEWE</sequence>
<reference key="1">
    <citation type="journal article" date="2001" name="J. Bacteriol.">
        <title>Genome of the bacterium Streptococcus pneumoniae strain R6.</title>
        <authorList>
            <person name="Hoskins J."/>
            <person name="Alborn W.E. Jr."/>
            <person name="Arnold J."/>
            <person name="Blaszczak L.C."/>
            <person name="Burgett S."/>
            <person name="DeHoff B.S."/>
            <person name="Estrem S.T."/>
            <person name="Fritz L."/>
            <person name="Fu D.-J."/>
            <person name="Fuller W."/>
            <person name="Geringer C."/>
            <person name="Gilmour R."/>
            <person name="Glass J.S."/>
            <person name="Khoja H."/>
            <person name="Kraft A.R."/>
            <person name="Lagace R.E."/>
            <person name="LeBlanc D.J."/>
            <person name="Lee L.N."/>
            <person name="Lefkowitz E.J."/>
            <person name="Lu J."/>
            <person name="Matsushima P."/>
            <person name="McAhren S.M."/>
            <person name="McHenney M."/>
            <person name="McLeaster K."/>
            <person name="Mundy C.W."/>
            <person name="Nicas T.I."/>
            <person name="Norris F.H."/>
            <person name="O'Gara M."/>
            <person name="Peery R.B."/>
            <person name="Robertson G.T."/>
            <person name="Rockey P."/>
            <person name="Sun P.-M."/>
            <person name="Winkler M.E."/>
            <person name="Yang Y."/>
            <person name="Young-Bellido M."/>
            <person name="Zhao G."/>
            <person name="Zook C.A."/>
            <person name="Baltz R.H."/>
            <person name="Jaskunas S.R."/>
            <person name="Rosteck P.R. Jr."/>
            <person name="Skatrud P.L."/>
            <person name="Glass J.I."/>
        </authorList>
    </citation>
    <scope>NUCLEOTIDE SEQUENCE [LARGE SCALE GENOMIC DNA]</scope>
    <source>
        <strain>ATCC BAA-255 / R6</strain>
    </source>
</reference>
<gene>
    <name evidence="1" type="primary">guaA</name>
    <name type="ordered locus">spr1300</name>
</gene>
<proteinExistence type="inferred from homology"/>
<evidence type="ECO:0000255" key="1">
    <source>
        <dbReference type="HAMAP-Rule" id="MF_00344"/>
    </source>
</evidence>
<dbReference type="EC" id="6.3.5.2" evidence="1"/>
<dbReference type="EMBL" id="AE007317">
    <property type="protein sequence ID" value="AAL00104.1"/>
    <property type="molecule type" value="Genomic_DNA"/>
</dbReference>
<dbReference type="PIR" id="C98034">
    <property type="entry name" value="C98034"/>
</dbReference>
<dbReference type="RefSeq" id="NP_358893.1">
    <property type="nucleotide sequence ID" value="NC_003098.1"/>
</dbReference>
<dbReference type="RefSeq" id="WP_000065723.1">
    <property type="nucleotide sequence ID" value="NC_003098.1"/>
</dbReference>
<dbReference type="SMR" id="P64298"/>
<dbReference type="STRING" id="171101.spr1300"/>
<dbReference type="GeneID" id="45653302"/>
<dbReference type="KEGG" id="spr:spr1300"/>
<dbReference type="PATRIC" id="fig|171101.6.peg.1411"/>
<dbReference type="eggNOG" id="COG0518">
    <property type="taxonomic scope" value="Bacteria"/>
</dbReference>
<dbReference type="eggNOG" id="COG0519">
    <property type="taxonomic scope" value="Bacteria"/>
</dbReference>
<dbReference type="HOGENOM" id="CLU_014340_0_5_9"/>
<dbReference type="UniPathway" id="UPA00189">
    <property type="reaction ID" value="UER00296"/>
</dbReference>
<dbReference type="Proteomes" id="UP000000586">
    <property type="component" value="Chromosome"/>
</dbReference>
<dbReference type="GO" id="GO:0005829">
    <property type="term" value="C:cytosol"/>
    <property type="evidence" value="ECO:0000318"/>
    <property type="project" value="GO_Central"/>
</dbReference>
<dbReference type="GO" id="GO:0005524">
    <property type="term" value="F:ATP binding"/>
    <property type="evidence" value="ECO:0007669"/>
    <property type="project" value="UniProtKB-UniRule"/>
</dbReference>
<dbReference type="GO" id="GO:0003921">
    <property type="term" value="F:GMP synthase activity"/>
    <property type="evidence" value="ECO:0000318"/>
    <property type="project" value="GO_Central"/>
</dbReference>
<dbReference type="GO" id="GO:0006177">
    <property type="term" value="P:GMP biosynthetic process"/>
    <property type="evidence" value="ECO:0000318"/>
    <property type="project" value="GO_Central"/>
</dbReference>
<dbReference type="CDD" id="cd01742">
    <property type="entry name" value="GATase1_GMP_Synthase"/>
    <property type="match status" value="1"/>
</dbReference>
<dbReference type="CDD" id="cd01997">
    <property type="entry name" value="GMP_synthase_C"/>
    <property type="match status" value="1"/>
</dbReference>
<dbReference type="FunFam" id="3.30.300.10:FF:000002">
    <property type="entry name" value="GMP synthase [glutamine-hydrolyzing]"/>
    <property type="match status" value="1"/>
</dbReference>
<dbReference type="FunFam" id="3.40.50.620:FF:000001">
    <property type="entry name" value="GMP synthase [glutamine-hydrolyzing]"/>
    <property type="match status" value="1"/>
</dbReference>
<dbReference type="FunFam" id="3.40.50.880:FF:000001">
    <property type="entry name" value="GMP synthase [glutamine-hydrolyzing]"/>
    <property type="match status" value="1"/>
</dbReference>
<dbReference type="Gene3D" id="3.30.300.10">
    <property type="match status" value="1"/>
</dbReference>
<dbReference type="Gene3D" id="3.40.50.880">
    <property type="match status" value="1"/>
</dbReference>
<dbReference type="Gene3D" id="3.40.50.620">
    <property type="entry name" value="HUPs"/>
    <property type="match status" value="1"/>
</dbReference>
<dbReference type="HAMAP" id="MF_00344">
    <property type="entry name" value="GMP_synthase"/>
    <property type="match status" value="1"/>
</dbReference>
<dbReference type="InterPro" id="IPR029062">
    <property type="entry name" value="Class_I_gatase-like"/>
</dbReference>
<dbReference type="InterPro" id="IPR017926">
    <property type="entry name" value="GATASE"/>
</dbReference>
<dbReference type="InterPro" id="IPR001674">
    <property type="entry name" value="GMP_synth_C"/>
</dbReference>
<dbReference type="InterPro" id="IPR004739">
    <property type="entry name" value="GMP_synth_GATase"/>
</dbReference>
<dbReference type="InterPro" id="IPR022955">
    <property type="entry name" value="GMP_synthase"/>
</dbReference>
<dbReference type="InterPro" id="IPR025777">
    <property type="entry name" value="GMPS_ATP_PPase_dom"/>
</dbReference>
<dbReference type="InterPro" id="IPR022310">
    <property type="entry name" value="NAD/GMP_synthase"/>
</dbReference>
<dbReference type="InterPro" id="IPR014729">
    <property type="entry name" value="Rossmann-like_a/b/a_fold"/>
</dbReference>
<dbReference type="NCBIfam" id="TIGR00884">
    <property type="entry name" value="guaA_Cterm"/>
    <property type="match status" value="1"/>
</dbReference>
<dbReference type="NCBIfam" id="TIGR00888">
    <property type="entry name" value="guaA_Nterm"/>
    <property type="match status" value="1"/>
</dbReference>
<dbReference type="NCBIfam" id="NF000848">
    <property type="entry name" value="PRK00074.1"/>
    <property type="match status" value="1"/>
</dbReference>
<dbReference type="PANTHER" id="PTHR11922:SF2">
    <property type="entry name" value="GMP SYNTHASE [GLUTAMINE-HYDROLYZING]"/>
    <property type="match status" value="1"/>
</dbReference>
<dbReference type="PANTHER" id="PTHR11922">
    <property type="entry name" value="GMP SYNTHASE-RELATED"/>
    <property type="match status" value="1"/>
</dbReference>
<dbReference type="Pfam" id="PF00117">
    <property type="entry name" value="GATase"/>
    <property type="match status" value="1"/>
</dbReference>
<dbReference type="Pfam" id="PF00958">
    <property type="entry name" value="GMP_synt_C"/>
    <property type="match status" value="1"/>
</dbReference>
<dbReference type="Pfam" id="PF02540">
    <property type="entry name" value="NAD_synthase"/>
    <property type="match status" value="1"/>
</dbReference>
<dbReference type="PRINTS" id="PR00097">
    <property type="entry name" value="ANTSNTHASEII"/>
</dbReference>
<dbReference type="PRINTS" id="PR00099">
    <property type="entry name" value="CPSGATASE"/>
</dbReference>
<dbReference type="PRINTS" id="PR00096">
    <property type="entry name" value="GATASE"/>
</dbReference>
<dbReference type="SUPFAM" id="SSF52402">
    <property type="entry name" value="Adenine nucleotide alpha hydrolases-like"/>
    <property type="match status" value="1"/>
</dbReference>
<dbReference type="SUPFAM" id="SSF52317">
    <property type="entry name" value="Class I glutamine amidotransferase-like"/>
    <property type="match status" value="1"/>
</dbReference>
<dbReference type="PROSITE" id="PS51273">
    <property type="entry name" value="GATASE_TYPE_1"/>
    <property type="match status" value="1"/>
</dbReference>
<dbReference type="PROSITE" id="PS51553">
    <property type="entry name" value="GMPS_ATP_PPASE"/>
    <property type="match status" value="1"/>
</dbReference>
<feature type="chain" id="PRO_0000140189" description="GMP synthase [glutamine-hydrolyzing]">
    <location>
        <begin position="1"/>
        <end position="520"/>
    </location>
</feature>
<feature type="domain" description="Glutamine amidotransferase type-1" evidence="1">
    <location>
        <begin position="13"/>
        <end position="205"/>
    </location>
</feature>
<feature type="domain" description="GMPS ATP-PPase" evidence="1">
    <location>
        <begin position="206"/>
        <end position="395"/>
    </location>
</feature>
<feature type="active site" description="Nucleophile" evidence="1">
    <location>
        <position position="90"/>
    </location>
</feature>
<feature type="active site" evidence="1">
    <location>
        <position position="179"/>
    </location>
</feature>
<feature type="active site" evidence="1">
    <location>
        <position position="181"/>
    </location>
</feature>
<feature type="binding site" evidence="1">
    <location>
        <begin position="233"/>
        <end position="239"/>
    </location>
    <ligand>
        <name>ATP</name>
        <dbReference type="ChEBI" id="CHEBI:30616"/>
    </ligand>
</feature>
<protein>
    <recommendedName>
        <fullName evidence="1">GMP synthase [glutamine-hydrolyzing]</fullName>
        <ecNumber evidence="1">6.3.5.2</ecNumber>
    </recommendedName>
    <alternativeName>
        <fullName evidence="1">GMP synthetase</fullName>
    </alternativeName>
    <alternativeName>
        <fullName evidence="1">Glutamine amidotransferase</fullName>
    </alternativeName>
</protein>
<comment type="function">
    <text evidence="1">Catalyzes the synthesis of GMP from XMP.</text>
</comment>
<comment type="catalytic activity">
    <reaction evidence="1">
        <text>XMP + L-glutamine + ATP + H2O = GMP + L-glutamate + AMP + diphosphate + 2 H(+)</text>
        <dbReference type="Rhea" id="RHEA:11680"/>
        <dbReference type="ChEBI" id="CHEBI:15377"/>
        <dbReference type="ChEBI" id="CHEBI:15378"/>
        <dbReference type="ChEBI" id="CHEBI:29985"/>
        <dbReference type="ChEBI" id="CHEBI:30616"/>
        <dbReference type="ChEBI" id="CHEBI:33019"/>
        <dbReference type="ChEBI" id="CHEBI:57464"/>
        <dbReference type="ChEBI" id="CHEBI:58115"/>
        <dbReference type="ChEBI" id="CHEBI:58359"/>
        <dbReference type="ChEBI" id="CHEBI:456215"/>
        <dbReference type="EC" id="6.3.5.2"/>
    </reaction>
</comment>
<comment type="pathway">
    <text evidence="1">Purine metabolism; GMP biosynthesis; GMP from XMP (L-Gln route): step 1/1.</text>
</comment>
<comment type="subunit">
    <text evidence="1">Homodimer.</text>
</comment>